<accession>A2YVR7</accession>
<accession>O22539</accession>
<accession>Q6AVF6</accession>
<accession>Q9LSU2</accession>
<comment type="function">
    <text>The proteasome is a multicatalytic proteinase complex which is characterized by its ability to cleave peptides with Arg, Phe, Tyr, Leu, and Glu adjacent to the leaving group at neutral or slightly basic pH. The proteasome has an ATP-dependent proteolytic activity.</text>
</comment>
<comment type="subunit">
    <text evidence="1">The 26S proteasome consists of a 20S proteasome core and two 19S regulatory subunits. The 20S proteasome core is composed of 28 subunits that are arranged in four stacked rings, resulting in a barrel-shaped structure. The two end rings are each formed by seven alpha subunits, and the two central rings are each formed by seven beta subunits. The catalytic chamber with the active sites is on the inside of the barrel (By similarity).</text>
</comment>
<comment type="subcellular location">
    <subcellularLocation>
        <location evidence="1">Cytoplasm</location>
    </subcellularLocation>
    <subcellularLocation>
        <location evidence="1">Nucleus</location>
    </subcellularLocation>
</comment>
<comment type="similarity">
    <text evidence="2">Belongs to the peptidase T1A family.</text>
</comment>
<comment type="sequence caution" evidence="3">
    <conflict type="frameshift">
        <sequence resource="EMBL-CDS" id="AAB82138"/>
    </conflict>
</comment>
<proteinExistence type="evidence at transcript level"/>
<protein>
    <recommendedName>
        <fullName>Proteasome subunit alpha type-2</fullName>
    </recommendedName>
    <alternativeName>
        <fullName>20S proteasome alpha subunit B</fullName>
    </alternativeName>
    <alternativeName>
        <fullName>20S proteasome subunit alpha-2</fullName>
    </alternativeName>
</protein>
<sequence>MGDSQYSFSLTTFSPSGKLVQIEHALTAVGSGQTSLGIKAANGVVIATEKKLPSILVDETSVQKIQSLTPNIGVVYSGMGPDFRVLVRKSRKQAQQYYRLYKETIPVTQLVRETAAVMQEFTQSGGVRPFGVSLLIAGYDDNGPQLYQVDPSGSYFSWKASAMGKNVSNAKTFLEKRYTEDMELDDAIHTAILTLKEGYEGQISANNIEIGIIRSDREFKVLSPAEIKDFLEEVE</sequence>
<organism>
    <name type="scientific">Oryza sativa subsp. indica</name>
    <name type="common">Rice</name>
    <dbReference type="NCBI Taxonomy" id="39946"/>
    <lineage>
        <taxon>Eukaryota</taxon>
        <taxon>Viridiplantae</taxon>
        <taxon>Streptophyta</taxon>
        <taxon>Embryophyta</taxon>
        <taxon>Tracheophyta</taxon>
        <taxon>Spermatophyta</taxon>
        <taxon>Magnoliopsida</taxon>
        <taxon>Liliopsida</taxon>
        <taxon>Poales</taxon>
        <taxon>Poaceae</taxon>
        <taxon>BOP clade</taxon>
        <taxon>Oryzoideae</taxon>
        <taxon>Oryzeae</taxon>
        <taxon>Oryzinae</taxon>
        <taxon>Oryza</taxon>
        <taxon>Oryza sativa</taxon>
    </lineage>
</organism>
<dbReference type="EMBL" id="AF022735">
    <property type="protein sequence ID" value="AAB82138.1"/>
    <property type="status" value="ALT_FRAME"/>
    <property type="molecule type" value="mRNA"/>
</dbReference>
<dbReference type="EMBL" id="CM000133">
    <property type="status" value="NOT_ANNOTATED_CDS"/>
    <property type="molecule type" value="Genomic_DNA"/>
</dbReference>
<dbReference type="PIR" id="T02089">
    <property type="entry name" value="T02089"/>
</dbReference>
<dbReference type="SMR" id="A2YVR7"/>
<dbReference type="STRING" id="39946.A2YVR7"/>
<dbReference type="EnsemblPlants" id="BGIOSGA026895-TA">
    <property type="protein sequence ID" value="BGIOSGA026895-PA"/>
    <property type="gene ID" value="BGIOSGA026895"/>
</dbReference>
<dbReference type="EnsemblPlants" id="OsGoSa_03g0019940.01">
    <property type="protein sequence ID" value="OsGoSa_03g0019940.01"/>
    <property type="gene ID" value="OsGoSa_03g0019940"/>
</dbReference>
<dbReference type="EnsemblPlants" id="OsIR64_03g0019590.01">
    <property type="protein sequence ID" value="OsIR64_03g0019590.01"/>
    <property type="gene ID" value="OsIR64_03g0019590"/>
</dbReference>
<dbReference type="EnsemblPlants" id="OsKYG_03g0019840.01">
    <property type="protein sequence ID" value="OsKYG_03g0019840.01"/>
    <property type="gene ID" value="OsKYG_03g0019840"/>
</dbReference>
<dbReference type="EnsemblPlants" id="OsLima_03g0019800.01">
    <property type="protein sequence ID" value="OsLima_03g0019800.01"/>
    <property type="gene ID" value="OsLima_03g0019800"/>
</dbReference>
<dbReference type="EnsemblPlants" id="OsMH63_03G019840_01">
    <property type="protein sequence ID" value="OsMH63_03G019840_01"/>
    <property type="gene ID" value="OsMH63_03G019840"/>
</dbReference>
<dbReference type="EnsemblPlants" id="OsPr106_03g0019810.01">
    <property type="protein sequence ID" value="OsPr106_03g0019810.01"/>
    <property type="gene ID" value="OsPr106_03g0019810"/>
</dbReference>
<dbReference type="EnsemblPlants" id="OsZS97_03G019760_01">
    <property type="protein sequence ID" value="OsZS97_03G019760_01"/>
    <property type="gene ID" value="OsZS97_03G019760"/>
</dbReference>
<dbReference type="EnsemblPlants" id="OsZS97_03G019760_02">
    <property type="protein sequence ID" value="OsZS97_03G019760_02"/>
    <property type="gene ID" value="OsZS97_03G019760"/>
</dbReference>
<dbReference type="Gramene" id="BGIOSGA026895-TA">
    <property type="protein sequence ID" value="BGIOSGA026895-PA"/>
    <property type="gene ID" value="BGIOSGA026895"/>
</dbReference>
<dbReference type="Gramene" id="OsGoSa_03g0019940.01">
    <property type="protein sequence ID" value="OsGoSa_03g0019940.01"/>
    <property type="gene ID" value="OsGoSa_03g0019940"/>
</dbReference>
<dbReference type="Gramene" id="OsIR64_03g0019590.01">
    <property type="protein sequence ID" value="OsIR64_03g0019590.01"/>
    <property type="gene ID" value="OsIR64_03g0019590"/>
</dbReference>
<dbReference type="Gramene" id="OsKYG_03g0019840.01">
    <property type="protein sequence ID" value="OsKYG_03g0019840.01"/>
    <property type="gene ID" value="OsKYG_03g0019840"/>
</dbReference>
<dbReference type="Gramene" id="OsLima_03g0019800.01">
    <property type="protein sequence ID" value="OsLima_03g0019800.01"/>
    <property type="gene ID" value="OsLima_03g0019800"/>
</dbReference>
<dbReference type="Gramene" id="OsMH63_03G019840_01">
    <property type="protein sequence ID" value="OsMH63_03G019840_01"/>
    <property type="gene ID" value="OsMH63_03G019840"/>
</dbReference>
<dbReference type="Gramene" id="OsPr106_03g0019810.01">
    <property type="protein sequence ID" value="OsPr106_03g0019810.01"/>
    <property type="gene ID" value="OsPr106_03g0019810"/>
</dbReference>
<dbReference type="Gramene" id="OsZS97_03G019760_01">
    <property type="protein sequence ID" value="OsZS97_03G019760_01"/>
    <property type="gene ID" value="OsZS97_03G019760"/>
</dbReference>
<dbReference type="Gramene" id="OsZS97_03G019760_02">
    <property type="protein sequence ID" value="OsZS97_03G019760_02"/>
    <property type="gene ID" value="OsZS97_03G019760"/>
</dbReference>
<dbReference type="HOGENOM" id="CLU_035750_4_1_1"/>
<dbReference type="OMA" id="WKACANG"/>
<dbReference type="OrthoDB" id="431557at2759"/>
<dbReference type="Proteomes" id="UP000007015">
    <property type="component" value="Chromosome 8"/>
</dbReference>
<dbReference type="GO" id="GO:0005737">
    <property type="term" value="C:cytoplasm"/>
    <property type="evidence" value="ECO:0007669"/>
    <property type="project" value="UniProtKB-SubCell"/>
</dbReference>
<dbReference type="GO" id="GO:0005634">
    <property type="term" value="C:nucleus"/>
    <property type="evidence" value="ECO:0007669"/>
    <property type="project" value="UniProtKB-SubCell"/>
</dbReference>
<dbReference type="GO" id="GO:0019773">
    <property type="term" value="C:proteasome core complex, alpha-subunit complex"/>
    <property type="evidence" value="ECO:0000250"/>
    <property type="project" value="UniProtKB"/>
</dbReference>
<dbReference type="GO" id="GO:0006511">
    <property type="term" value="P:ubiquitin-dependent protein catabolic process"/>
    <property type="evidence" value="ECO:0007669"/>
    <property type="project" value="InterPro"/>
</dbReference>
<dbReference type="CDD" id="cd03750">
    <property type="entry name" value="proteasome_alpha_type_2"/>
    <property type="match status" value="1"/>
</dbReference>
<dbReference type="FunFam" id="3.60.20.10:FF:000028">
    <property type="entry name" value="Proteasome subunit alpha type"/>
    <property type="match status" value="1"/>
</dbReference>
<dbReference type="Gene3D" id="3.60.20.10">
    <property type="entry name" value="Glutamine Phosphoribosylpyrophosphate, subunit 1, domain 1"/>
    <property type="match status" value="1"/>
</dbReference>
<dbReference type="InterPro" id="IPR029055">
    <property type="entry name" value="Ntn_hydrolases_N"/>
</dbReference>
<dbReference type="InterPro" id="IPR050115">
    <property type="entry name" value="Proteasome_alpha"/>
</dbReference>
<dbReference type="InterPro" id="IPR023332">
    <property type="entry name" value="Proteasome_alpha-type"/>
</dbReference>
<dbReference type="InterPro" id="IPR000426">
    <property type="entry name" value="Proteasome_asu_N"/>
</dbReference>
<dbReference type="InterPro" id="IPR001353">
    <property type="entry name" value="Proteasome_sua/b"/>
</dbReference>
<dbReference type="NCBIfam" id="NF003075">
    <property type="entry name" value="PRK03996.1"/>
    <property type="match status" value="1"/>
</dbReference>
<dbReference type="PANTHER" id="PTHR11599">
    <property type="entry name" value="PROTEASOME SUBUNIT ALPHA/BETA"/>
    <property type="match status" value="1"/>
</dbReference>
<dbReference type="Pfam" id="PF00227">
    <property type="entry name" value="Proteasome"/>
    <property type="match status" value="1"/>
</dbReference>
<dbReference type="Pfam" id="PF10584">
    <property type="entry name" value="Proteasome_A_N"/>
    <property type="match status" value="1"/>
</dbReference>
<dbReference type="SMART" id="SM00948">
    <property type="entry name" value="Proteasome_A_N"/>
    <property type="match status" value="1"/>
</dbReference>
<dbReference type="SUPFAM" id="SSF56235">
    <property type="entry name" value="N-terminal nucleophile aminohydrolases (Ntn hydrolases)"/>
    <property type="match status" value="1"/>
</dbReference>
<dbReference type="PROSITE" id="PS00388">
    <property type="entry name" value="PROTEASOME_ALPHA_1"/>
    <property type="match status" value="1"/>
</dbReference>
<dbReference type="PROSITE" id="PS51475">
    <property type="entry name" value="PROTEASOME_ALPHA_2"/>
    <property type="match status" value="1"/>
</dbReference>
<gene>
    <name type="primary">PAB1</name>
    <name type="ORF">OsI_028410</name>
</gene>
<evidence type="ECO:0000250" key="1"/>
<evidence type="ECO:0000255" key="2">
    <source>
        <dbReference type="PROSITE-ProRule" id="PRU00808"/>
    </source>
</evidence>
<evidence type="ECO:0000305" key="3"/>
<name>PSA2_ORYSI</name>
<keyword id="KW-0963">Cytoplasm</keyword>
<keyword id="KW-0539">Nucleus</keyword>
<keyword id="KW-0647">Proteasome</keyword>
<keyword id="KW-1185">Reference proteome</keyword>
<reference key="1">
    <citation type="submission" date="1997-09" db="EMBL/GenBank/DDBJ databases">
        <title>Isolation and characterization of proteasome from rice.</title>
        <authorList>
            <person name="Lee M.C."/>
            <person name="Kim C.S."/>
            <person name="Eun M.Y."/>
        </authorList>
    </citation>
    <scope>NUCLEOTIDE SEQUENCE [MRNA]</scope>
    <source>
        <strain>cv. Milyang 23</strain>
        <tissue>Seed</tissue>
    </source>
</reference>
<reference key="2">
    <citation type="journal article" date="2005" name="PLoS Biol.">
        <title>The genomes of Oryza sativa: a history of duplications.</title>
        <authorList>
            <person name="Yu J."/>
            <person name="Wang J."/>
            <person name="Lin W."/>
            <person name="Li S."/>
            <person name="Li H."/>
            <person name="Zhou J."/>
            <person name="Ni P."/>
            <person name="Dong W."/>
            <person name="Hu S."/>
            <person name="Zeng C."/>
            <person name="Zhang J."/>
            <person name="Zhang Y."/>
            <person name="Li R."/>
            <person name="Xu Z."/>
            <person name="Li S."/>
            <person name="Li X."/>
            <person name="Zheng H."/>
            <person name="Cong L."/>
            <person name="Lin L."/>
            <person name="Yin J."/>
            <person name="Geng J."/>
            <person name="Li G."/>
            <person name="Shi J."/>
            <person name="Liu J."/>
            <person name="Lv H."/>
            <person name="Li J."/>
            <person name="Wang J."/>
            <person name="Deng Y."/>
            <person name="Ran L."/>
            <person name="Shi X."/>
            <person name="Wang X."/>
            <person name="Wu Q."/>
            <person name="Li C."/>
            <person name="Ren X."/>
            <person name="Wang J."/>
            <person name="Wang X."/>
            <person name="Li D."/>
            <person name="Liu D."/>
            <person name="Zhang X."/>
            <person name="Ji Z."/>
            <person name="Zhao W."/>
            <person name="Sun Y."/>
            <person name="Zhang Z."/>
            <person name="Bao J."/>
            <person name="Han Y."/>
            <person name="Dong L."/>
            <person name="Ji J."/>
            <person name="Chen P."/>
            <person name="Wu S."/>
            <person name="Liu J."/>
            <person name="Xiao Y."/>
            <person name="Bu D."/>
            <person name="Tan J."/>
            <person name="Yang L."/>
            <person name="Ye C."/>
            <person name="Zhang J."/>
            <person name="Xu J."/>
            <person name="Zhou Y."/>
            <person name="Yu Y."/>
            <person name="Zhang B."/>
            <person name="Zhuang S."/>
            <person name="Wei H."/>
            <person name="Liu B."/>
            <person name="Lei M."/>
            <person name="Yu H."/>
            <person name="Li Y."/>
            <person name="Xu H."/>
            <person name="Wei S."/>
            <person name="He X."/>
            <person name="Fang L."/>
            <person name="Zhang Z."/>
            <person name="Zhang Y."/>
            <person name="Huang X."/>
            <person name="Su Z."/>
            <person name="Tong W."/>
            <person name="Li J."/>
            <person name="Tong Z."/>
            <person name="Li S."/>
            <person name="Ye J."/>
            <person name="Wang L."/>
            <person name="Fang L."/>
            <person name="Lei T."/>
            <person name="Chen C.-S."/>
            <person name="Chen H.-C."/>
            <person name="Xu Z."/>
            <person name="Li H."/>
            <person name="Huang H."/>
            <person name="Zhang F."/>
            <person name="Xu H."/>
            <person name="Li N."/>
            <person name="Zhao C."/>
            <person name="Li S."/>
            <person name="Dong L."/>
            <person name="Huang Y."/>
            <person name="Li L."/>
            <person name="Xi Y."/>
            <person name="Qi Q."/>
            <person name="Li W."/>
            <person name="Zhang B."/>
            <person name="Hu W."/>
            <person name="Zhang Y."/>
            <person name="Tian X."/>
            <person name="Jiao Y."/>
            <person name="Liang X."/>
            <person name="Jin J."/>
            <person name="Gao L."/>
            <person name="Zheng W."/>
            <person name="Hao B."/>
            <person name="Liu S.-M."/>
            <person name="Wang W."/>
            <person name="Yuan L."/>
            <person name="Cao M."/>
            <person name="McDermott J."/>
            <person name="Samudrala R."/>
            <person name="Wang J."/>
            <person name="Wong G.K.-S."/>
            <person name="Yang H."/>
        </authorList>
    </citation>
    <scope>NUCLEOTIDE SEQUENCE [LARGE SCALE GENOMIC DNA]</scope>
    <source>
        <strain>cv. 93-11</strain>
    </source>
</reference>
<feature type="chain" id="PRO_0000301662" description="Proteasome subunit alpha type-2">
    <location>
        <begin position="1"/>
        <end position="235"/>
    </location>
</feature>
<feature type="sequence conflict" description="In Ref. 1; AAB82138." evidence="3" ref="1">
    <original>E</original>
    <variation>N</variation>
    <location>
        <position position="23"/>
    </location>
</feature>
<feature type="sequence conflict" description="In Ref. 1; AAB82138." evidence="3" ref="1">
    <original>VI</original>
    <variation>FV</variation>
    <location>
        <begin position="45"/>
        <end position="46"/>
    </location>
</feature>
<feature type="sequence conflict" description="In Ref. 1; AAB82138." evidence="3" ref="1">
    <original>I</original>
    <variation>V</variation>
    <location>
        <position position="72"/>
    </location>
</feature>
<feature type="sequence conflict" description="In Ref. 1; AAB82138." evidence="3" ref="1">
    <original>R</original>
    <variation>P</variation>
    <location>
        <position position="91"/>
    </location>
</feature>
<feature type="sequence conflict" description="In Ref. 1; AAB82138." evidence="3" ref="1">
    <original>YY</original>
    <variation>CC</variation>
    <location>
        <begin position="97"/>
        <end position="98"/>
    </location>
</feature>
<feature type="sequence conflict" description="In Ref. 1; AAB82138." evidence="3" ref="1">
    <original>I</original>
    <variation>M</variation>
    <location>
        <position position="105"/>
    </location>
</feature>
<feature type="sequence conflict" description="In Ref. 1; AAB82138." evidence="3" ref="1">
    <original>Y</original>
    <variation>H</variation>
    <location>
        <position position="178"/>
    </location>
</feature>
<feature type="sequence conflict" description="In Ref. 1; AAB82138." evidence="3" ref="1">
    <original>A</original>
    <variation>G</variation>
    <location>
        <position position="191"/>
    </location>
</feature>
<feature type="sequence conflict" description="In Ref. 1; AAB82138." evidence="3" ref="1">
    <original>T</original>
    <variation>I</variation>
    <location>
        <position position="194"/>
    </location>
</feature>